<dbReference type="EC" id="3.6.5.n1" evidence="1"/>
<dbReference type="EMBL" id="CP001083">
    <property type="protein sequence ID" value="ACQ53579.1"/>
    <property type="molecule type" value="Genomic_DNA"/>
</dbReference>
<dbReference type="RefSeq" id="WP_003359990.1">
    <property type="nucleotide sequence ID" value="NC_012658.1"/>
</dbReference>
<dbReference type="SMR" id="C3L3H1"/>
<dbReference type="KEGG" id="cbi:CLJ_B3220"/>
<dbReference type="HOGENOM" id="CLU_009995_3_3_9"/>
<dbReference type="Proteomes" id="UP000002333">
    <property type="component" value="Chromosome"/>
</dbReference>
<dbReference type="GO" id="GO:0005886">
    <property type="term" value="C:plasma membrane"/>
    <property type="evidence" value="ECO:0007669"/>
    <property type="project" value="UniProtKB-SubCell"/>
</dbReference>
<dbReference type="GO" id="GO:0005525">
    <property type="term" value="F:GTP binding"/>
    <property type="evidence" value="ECO:0007669"/>
    <property type="project" value="UniProtKB-UniRule"/>
</dbReference>
<dbReference type="GO" id="GO:0003924">
    <property type="term" value="F:GTPase activity"/>
    <property type="evidence" value="ECO:0007669"/>
    <property type="project" value="UniProtKB-UniRule"/>
</dbReference>
<dbReference type="GO" id="GO:0043022">
    <property type="term" value="F:ribosome binding"/>
    <property type="evidence" value="ECO:0007669"/>
    <property type="project" value="UniProtKB-UniRule"/>
</dbReference>
<dbReference type="GO" id="GO:0003746">
    <property type="term" value="F:translation elongation factor activity"/>
    <property type="evidence" value="ECO:0007669"/>
    <property type="project" value="UniProtKB-UniRule"/>
</dbReference>
<dbReference type="GO" id="GO:0045727">
    <property type="term" value="P:positive regulation of translation"/>
    <property type="evidence" value="ECO:0007669"/>
    <property type="project" value="UniProtKB-UniRule"/>
</dbReference>
<dbReference type="CDD" id="cd03699">
    <property type="entry name" value="EF4_II"/>
    <property type="match status" value="1"/>
</dbReference>
<dbReference type="CDD" id="cd16260">
    <property type="entry name" value="EF4_III"/>
    <property type="match status" value="1"/>
</dbReference>
<dbReference type="CDD" id="cd01890">
    <property type="entry name" value="LepA"/>
    <property type="match status" value="1"/>
</dbReference>
<dbReference type="CDD" id="cd03709">
    <property type="entry name" value="lepA_C"/>
    <property type="match status" value="1"/>
</dbReference>
<dbReference type="FunFam" id="3.40.50.300:FF:000078">
    <property type="entry name" value="Elongation factor 4"/>
    <property type="match status" value="1"/>
</dbReference>
<dbReference type="FunFam" id="2.40.30.10:FF:000015">
    <property type="entry name" value="Translation factor GUF1, mitochondrial"/>
    <property type="match status" value="1"/>
</dbReference>
<dbReference type="FunFam" id="3.30.70.240:FF:000007">
    <property type="entry name" value="Translation factor GUF1, mitochondrial"/>
    <property type="match status" value="1"/>
</dbReference>
<dbReference type="FunFam" id="3.30.70.2570:FF:000001">
    <property type="entry name" value="Translation factor GUF1, mitochondrial"/>
    <property type="match status" value="1"/>
</dbReference>
<dbReference type="FunFam" id="3.30.70.870:FF:000004">
    <property type="entry name" value="Translation factor GUF1, mitochondrial"/>
    <property type="match status" value="1"/>
</dbReference>
<dbReference type="Gene3D" id="3.30.70.240">
    <property type="match status" value="1"/>
</dbReference>
<dbReference type="Gene3D" id="3.30.70.2570">
    <property type="entry name" value="Elongation factor 4, C-terminal domain"/>
    <property type="match status" value="1"/>
</dbReference>
<dbReference type="Gene3D" id="3.30.70.870">
    <property type="entry name" value="Elongation Factor G (Translational Gtpase), domain 3"/>
    <property type="match status" value="1"/>
</dbReference>
<dbReference type="Gene3D" id="3.40.50.300">
    <property type="entry name" value="P-loop containing nucleotide triphosphate hydrolases"/>
    <property type="match status" value="1"/>
</dbReference>
<dbReference type="Gene3D" id="2.40.30.10">
    <property type="entry name" value="Translation factors"/>
    <property type="match status" value="1"/>
</dbReference>
<dbReference type="HAMAP" id="MF_00071">
    <property type="entry name" value="LepA"/>
    <property type="match status" value="1"/>
</dbReference>
<dbReference type="InterPro" id="IPR006297">
    <property type="entry name" value="EF-4"/>
</dbReference>
<dbReference type="InterPro" id="IPR035647">
    <property type="entry name" value="EFG_III/V"/>
</dbReference>
<dbReference type="InterPro" id="IPR000640">
    <property type="entry name" value="EFG_V-like"/>
</dbReference>
<dbReference type="InterPro" id="IPR004161">
    <property type="entry name" value="EFTu-like_2"/>
</dbReference>
<dbReference type="InterPro" id="IPR031157">
    <property type="entry name" value="G_TR_CS"/>
</dbReference>
<dbReference type="InterPro" id="IPR038363">
    <property type="entry name" value="LepA_C_sf"/>
</dbReference>
<dbReference type="InterPro" id="IPR013842">
    <property type="entry name" value="LepA_CTD"/>
</dbReference>
<dbReference type="InterPro" id="IPR035654">
    <property type="entry name" value="LepA_IV"/>
</dbReference>
<dbReference type="InterPro" id="IPR027417">
    <property type="entry name" value="P-loop_NTPase"/>
</dbReference>
<dbReference type="InterPro" id="IPR005225">
    <property type="entry name" value="Small_GTP-bd"/>
</dbReference>
<dbReference type="InterPro" id="IPR000795">
    <property type="entry name" value="T_Tr_GTP-bd_dom"/>
</dbReference>
<dbReference type="NCBIfam" id="TIGR01393">
    <property type="entry name" value="lepA"/>
    <property type="match status" value="1"/>
</dbReference>
<dbReference type="NCBIfam" id="TIGR00231">
    <property type="entry name" value="small_GTP"/>
    <property type="match status" value="1"/>
</dbReference>
<dbReference type="PANTHER" id="PTHR43512:SF4">
    <property type="entry name" value="TRANSLATION FACTOR GUF1 HOMOLOG, CHLOROPLASTIC"/>
    <property type="match status" value="1"/>
</dbReference>
<dbReference type="PANTHER" id="PTHR43512">
    <property type="entry name" value="TRANSLATION FACTOR GUF1-RELATED"/>
    <property type="match status" value="1"/>
</dbReference>
<dbReference type="Pfam" id="PF00679">
    <property type="entry name" value="EFG_C"/>
    <property type="match status" value="1"/>
</dbReference>
<dbReference type="Pfam" id="PF00009">
    <property type="entry name" value="GTP_EFTU"/>
    <property type="match status" value="1"/>
</dbReference>
<dbReference type="Pfam" id="PF03144">
    <property type="entry name" value="GTP_EFTU_D2"/>
    <property type="match status" value="1"/>
</dbReference>
<dbReference type="Pfam" id="PF06421">
    <property type="entry name" value="LepA_C"/>
    <property type="match status" value="1"/>
</dbReference>
<dbReference type="PRINTS" id="PR00315">
    <property type="entry name" value="ELONGATNFCT"/>
</dbReference>
<dbReference type="SMART" id="SM00838">
    <property type="entry name" value="EFG_C"/>
    <property type="match status" value="1"/>
</dbReference>
<dbReference type="SUPFAM" id="SSF54980">
    <property type="entry name" value="EF-G C-terminal domain-like"/>
    <property type="match status" value="2"/>
</dbReference>
<dbReference type="SUPFAM" id="SSF52540">
    <property type="entry name" value="P-loop containing nucleoside triphosphate hydrolases"/>
    <property type="match status" value="1"/>
</dbReference>
<dbReference type="PROSITE" id="PS00301">
    <property type="entry name" value="G_TR_1"/>
    <property type="match status" value="1"/>
</dbReference>
<dbReference type="PROSITE" id="PS51722">
    <property type="entry name" value="G_TR_2"/>
    <property type="match status" value="1"/>
</dbReference>
<keyword id="KW-1003">Cell membrane</keyword>
<keyword id="KW-0342">GTP-binding</keyword>
<keyword id="KW-0378">Hydrolase</keyword>
<keyword id="KW-0472">Membrane</keyword>
<keyword id="KW-0547">Nucleotide-binding</keyword>
<keyword id="KW-0648">Protein biosynthesis</keyword>
<accession>C3L3H1</accession>
<name>LEPA_CLOB6</name>
<proteinExistence type="inferred from homology"/>
<protein>
    <recommendedName>
        <fullName evidence="1">Elongation factor 4</fullName>
        <shortName evidence="1">EF-4</shortName>
        <ecNumber evidence="1">3.6.5.n1</ecNumber>
    </recommendedName>
    <alternativeName>
        <fullName evidence="1">Ribosomal back-translocase LepA</fullName>
    </alternativeName>
</protein>
<organism>
    <name type="scientific">Clostridium botulinum (strain 657 / Type Ba4)</name>
    <dbReference type="NCBI Taxonomy" id="515621"/>
    <lineage>
        <taxon>Bacteria</taxon>
        <taxon>Bacillati</taxon>
        <taxon>Bacillota</taxon>
        <taxon>Clostridia</taxon>
        <taxon>Eubacteriales</taxon>
        <taxon>Clostridiaceae</taxon>
        <taxon>Clostridium</taxon>
    </lineage>
</organism>
<gene>
    <name evidence="1" type="primary">lepA</name>
    <name type="ordered locus">CLJ_B3220</name>
</gene>
<comment type="function">
    <text evidence="1">Required for accurate and efficient protein synthesis under certain stress conditions. May act as a fidelity factor of the translation reaction, by catalyzing a one-codon backward translocation of tRNAs on improperly translocated ribosomes. Back-translocation proceeds from a post-translocation (POST) complex to a pre-translocation (PRE) complex, thus giving elongation factor G a second chance to translocate the tRNAs correctly. Binds to ribosomes in a GTP-dependent manner.</text>
</comment>
<comment type="catalytic activity">
    <reaction evidence="1">
        <text>GTP + H2O = GDP + phosphate + H(+)</text>
        <dbReference type="Rhea" id="RHEA:19669"/>
        <dbReference type="ChEBI" id="CHEBI:15377"/>
        <dbReference type="ChEBI" id="CHEBI:15378"/>
        <dbReference type="ChEBI" id="CHEBI:37565"/>
        <dbReference type="ChEBI" id="CHEBI:43474"/>
        <dbReference type="ChEBI" id="CHEBI:58189"/>
        <dbReference type="EC" id="3.6.5.n1"/>
    </reaction>
</comment>
<comment type="subcellular location">
    <subcellularLocation>
        <location evidence="1">Cell membrane</location>
        <topology evidence="1">Peripheral membrane protein</topology>
        <orientation evidence="1">Cytoplasmic side</orientation>
    </subcellularLocation>
</comment>
<comment type="similarity">
    <text evidence="1">Belongs to the TRAFAC class translation factor GTPase superfamily. Classic translation factor GTPase family. LepA subfamily.</text>
</comment>
<evidence type="ECO:0000255" key="1">
    <source>
        <dbReference type="HAMAP-Rule" id="MF_00071"/>
    </source>
</evidence>
<feature type="chain" id="PRO_1000202445" description="Elongation factor 4">
    <location>
        <begin position="1"/>
        <end position="602"/>
    </location>
</feature>
<feature type="domain" description="tr-type G">
    <location>
        <begin position="7"/>
        <end position="189"/>
    </location>
</feature>
<feature type="binding site" evidence="1">
    <location>
        <begin position="19"/>
        <end position="24"/>
    </location>
    <ligand>
        <name>GTP</name>
        <dbReference type="ChEBI" id="CHEBI:37565"/>
    </ligand>
</feature>
<feature type="binding site" evidence="1">
    <location>
        <begin position="136"/>
        <end position="139"/>
    </location>
    <ligand>
        <name>GTP</name>
        <dbReference type="ChEBI" id="CHEBI:37565"/>
    </ligand>
</feature>
<sequence length="602" mass="67144">MQSERQKYIRNFSIVAHIDHGKSTLADRLIEATGTLTEREMDTQVLDNMDLEKERGITIKSQAVRLIYKRDTGEEYTLNLIDTPGHVDFNYEVSRSLAACEGAILVVDATQGIQAQTLANCYLALDNDLEIVPVINKIDLPSARPEEVKQEIEDVIGIEAEGAPLVSAKTGLNIKDALEAIVNKVPAPDGDEKAPLKALIFDSYYDSYKGVVCHIRVKEGTIKEGTEIKLMNTGKVYEVVEVGVFVPNYMPVDELKAGDVGYVTASIKNVRDARVGDTITEAKRSANEALSGYRPAVPMVFSGIYPVDGAKYEELKEALEKLQVNDAALSFEPETSIALGFGFRCGFLGLLHMDIIQERLEREFNLDIITTAPSVIYKITKTDGTLIELTNPTNMPSPSEIKLMEEPIVKSSIITPSDYVGAVMDLAQNRRGIFKDMQYLDTTRVSLNYEIPLNEIIYDFFDALKSRTRGYASFDYELIGYKDADLVKLDILLNADIVDALSMIVPRERAYAKGRNMAQKLKEIIPRQMFEIPIQAAVGAKIIARETIKAMRKDVLAKCYGGDISRKRKLLEKQKEGKKRMRQVGSVEVPQEAFMAVLKTEE</sequence>
<reference key="1">
    <citation type="submission" date="2008-05" db="EMBL/GenBank/DDBJ databases">
        <title>Genome sequence of Clostridium botulinum Ba4 strain 657.</title>
        <authorList>
            <person name="Shrivastava S."/>
            <person name="Brown J.L."/>
            <person name="Bruce D."/>
            <person name="Detter C."/>
            <person name="Munk C."/>
            <person name="Smith L.A."/>
            <person name="Smith T.J."/>
            <person name="Sutton G."/>
            <person name="Brettin T.S."/>
        </authorList>
    </citation>
    <scope>NUCLEOTIDE SEQUENCE [LARGE SCALE GENOMIC DNA]</scope>
    <source>
        <strain>657 / Type Ba4</strain>
    </source>
</reference>